<gene>
    <name evidence="4" type="primary">phnA</name>
</gene>
<keyword id="KW-0378">Hydrolase</keyword>
<keyword id="KW-0479">Metal-binding</keyword>
<keyword id="KW-0862">Zinc</keyword>
<proteinExistence type="inferred from homology"/>
<sequence length="407" mass="44434">MTQLINVNSRSYRLSSAPTIVICVDGCEQEYINQAIQAGQTPFLAELTGFGTVLTGDCVVPSFTNPNNLSIVTGAPPSVHGICGNFFFDQETQEEVLMNDAKYLRAPTILAEMAKAGQLVAVVTAKDKLRNLLGHQLKGICFSAEKADQVNLEEHGVENILARVGMPVPSVYSADLSEFVFAAGLSLLTNERPDFMYLSTTDYVQHKHAPGTPEANAFYAMMDSYFKRYHEEGAIVAITADHGMNAKTDAIGRPNILFLQDLLDAQYGARRTRVLLPITDPYVVHHGALGSYATVYLRDAVPQRDAIDFLAGIAGVEAVLTRSQACQRFELPEDRIGDLVVLGERLTVLGSAADKHDLSGLTVPLRSHGGVSEQKVPLIFNRKLVGLDSFDRLRNFDIIDLALNHLA</sequence>
<organism>
    <name type="scientific">Pseudomonas cedrina</name>
    <dbReference type="NCBI Taxonomy" id="651740"/>
    <lineage>
        <taxon>Bacteria</taxon>
        <taxon>Pseudomonadati</taxon>
        <taxon>Pseudomonadota</taxon>
        <taxon>Gammaproteobacteria</taxon>
        <taxon>Pseudomonadales</taxon>
        <taxon>Pseudomonadaceae</taxon>
        <taxon>Pseudomonas</taxon>
    </lineage>
</organism>
<accession>Q50HR5</accession>
<reference evidence="3 4" key="1">
    <citation type="journal article" date="2006" name="Environ. Microbiol.">
        <title>Detection of phosphonoacetate degradation and phnA genes in soil bacteria from distinct geographical origins suggest its possible biogenic origin.</title>
        <authorList>
            <person name="Panas P."/>
            <person name="Ternan N.G."/>
            <person name="Dooley J.S."/>
            <person name="McMullan G."/>
        </authorList>
    </citation>
    <scope>NUCLEOTIDE SEQUENCE [GENOMIC DNA]</scope>
    <source>
        <strain evidence="2">Subsp. cedrina</strain>
    </source>
</reference>
<name>PHNHY_PSECE</name>
<dbReference type="EC" id="3.11.1.2"/>
<dbReference type="EMBL" id="AJ969113">
    <property type="protein sequence ID" value="CAI93866.1"/>
    <property type="molecule type" value="Genomic_DNA"/>
</dbReference>
<dbReference type="SMR" id="Q50HR5"/>
<dbReference type="GO" id="GO:0046872">
    <property type="term" value="F:metal ion binding"/>
    <property type="evidence" value="ECO:0007669"/>
    <property type="project" value="UniProtKB-KW"/>
</dbReference>
<dbReference type="GO" id="GO:0047400">
    <property type="term" value="F:phosphonoacetate hydrolase activity"/>
    <property type="evidence" value="ECO:0000250"/>
    <property type="project" value="UniProtKB"/>
</dbReference>
<dbReference type="GO" id="GO:0019636">
    <property type="term" value="P:phosphonoacetate metabolic process"/>
    <property type="evidence" value="ECO:0000250"/>
    <property type="project" value="UniProtKB"/>
</dbReference>
<dbReference type="CDD" id="cd16018">
    <property type="entry name" value="Enpp"/>
    <property type="match status" value="1"/>
</dbReference>
<dbReference type="Gene3D" id="3.40.720.10">
    <property type="entry name" value="Alkaline Phosphatase, subunit A"/>
    <property type="match status" value="1"/>
</dbReference>
<dbReference type="Gene3D" id="3.30.1360.110">
    <property type="entry name" value="Domain 2, Phosphonoacetate Hydrolase"/>
    <property type="match status" value="1"/>
</dbReference>
<dbReference type="InterPro" id="IPR017850">
    <property type="entry name" value="Alkaline_phosphatase_core_sf"/>
</dbReference>
<dbReference type="InterPro" id="IPR002591">
    <property type="entry name" value="Phosphodiest/P_Trfase"/>
</dbReference>
<dbReference type="InterPro" id="IPR012710">
    <property type="entry name" value="Phosphonoacetate_hydro"/>
</dbReference>
<dbReference type="InterPro" id="IPR023116">
    <property type="entry name" value="Phosphonoacetate_hydro_insert"/>
</dbReference>
<dbReference type="NCBIfam" id="TIGR02335">
    <property type="entry name" value="hydr_PhnA"/>
    <property type="match status" value="1"/>
</dbReference>
<dbReference type="PANTHER" id="PTHR10151:SF120">
    <property type="entry name" value="BIS(5'-ADENOSYL)-TRIPHOSPHATASE"/>
    <property type="match status" value="1"/>
</dbReference>
<dbReference type="PANTHER" id="PTHR10151">
    <property type="entry name" value="ECTONUCLEOTIDE PYROPHOSPHATASE/PHOSPHODIESTERASE"/>
    <property type="match status" value="1"/>
</dbReference>
<dbReference type="Pfam" id="PF01663">
    <property type="entry name" value="Phosphodiest"/>
    <property type="match status" value="1"/>
</dbReference>
<dbReference type="SUPFAM" id="SSF53649">
    <property type="entry name" value="Alkaline phosphatase-like"/>
    <property type="match status" value="1"/>
</dbReference>
<feature type="initiator methionine" description="Removed" evidence="1">
    <location>
        <position position="1"/>
    </location>
</feature>
<feature type="chain" id="PRO_0000402578" description="Phosphonoacetate hydrolase" evidence="1">
    <location>
        <begin position="2"/>
        <end position="407"/>
    </location>
</feature>
<feature type="binding site" evidence="1">
    <location>
        <position position="25"/>
    </location>
    <ligand>
        <name>Zn(2+)</name>
        <dbReference type="ChEBI" id="CHEBI:29105"/>
        <label>1</label>
    </ligand>
</feature>
<feature type="binding site" evidence="1">
    <location>
        <position position="64"/>
    </location>
    <ligand>
        <name>substrate</name>
    </ligand>
</feature>
<feature type="binding site" evidence="1">
    <location>
        <position position="64"/>
    </location>
    <ligand>
        <name>Zn(2+)</name>
        <dbReference type="ChEBI" id="CHEBI:29105"/>
        <label>1</label>
    </ligand>
</feature>
<feature type="binding site" evidence="1">
    <location>
        <position position="202"/>
    </location>
    <ligand>
        <name>substrate</name>
    </ligand>
</feature>
<feature type="binding site" evidence="1">
    <location>
        <position position="202"/>
    </location>
    <ligand>
        <name>Zn(2+)</name>
        <dbReference type="ChEBI" id="CHEBI:29105"/>
        <label>2</label>
    </ligand>
</feature>
<feature type="binding site" evidence="1">
    <location>
        <position position="206"/>
    </location>
    <ligand>
        <name>Zn(2+)</name>
        <dbReference type="ChEBI" id="CHEBI:29105"/>
        <label>2</label>
    </ligand>
</feature>
<feature type="binding site" evidence="1">
    <location>
        <position position="241"/>
    </location>
    <ligand>
        <name>Zn(2+)</name>
        <dbReference type="ChEBI" id="CHEBI:29105"/>
        <label>1</label>
    </ligand>
</feature>
<feature type="binding site" evidence="1">
    <location>
        <position position="242"/>
    </location>
    <ligand>
        <name>substrate</name>
    </ligand>
</feature>
<feature type="binding site" evidence="1">
    <location>
        <position position="242"/>
    </location>
    <ligand>
        <name>Zn(2+)</name>
        <dbReference type="ChEBI" id="CHEBI:29105"/>
        <label>1</label>
    </ligand>
</feature>
<feature type="binding site" evidence="1">
    <location>
        <position position="368"/>
    </location>
    <ligand>
        <name>substrate</name>
    </ligand>
</feature>
<feature type="binding site" evidence="1">
    <location>
        <position position="368"/>
    </location>
    <ligand>
        <name>Zn(2+)</name>
        <dbReference type="ChEBI" id="CHEBI:29105"/>
        <label>2</label>
    </ligand>
</feature>
<evidence type="ECO:0000250" key="1">
    <source>
        <dbReference type="UniProtKB" id="Q51782"/>
    </source>
</evidence>
<evidence type="ECO:0000269" key="2">
    <source>
    </source>
</evidence>
<evidence type="ECO:0000305" key="3"/>
<evidence type="ECO:0000312" key="4">
    <source>
        <dbReference type="EMBL" id="CAI93866.1"/>
    </source>
</evidence>
<comment type="function">
    <text evidence="1">Specifically hydrolyzes phosphonoacetate. Does not have activity on other organophosphonates or acetates (By similarity).</text>
</comment>
<comment type="catalytic activity">
    <reaction evidence="1">
        <text>phosphonoacetate + H2O = acetate + phosphate + H(+)</text>
        <dbReference type="Rhea" id="RHEA:16749"/>
        <dbReference type="ChEBI" id="CHEBI:15377"/>
        <dbReference type="ChEBI" id="CHEBI:15378"/>
        <dbReference type="ChEBI" id="CHEBI:30089"/>
        <dbReference type="ChEBI" id="CHEBI:43474"/>
        <dbReference type="ChEBI" id="CHEBI:57488"/>
        <dbReference type="EC" id="3.11.1.2"/>
    </reaction>
</comment>
<comment type="cofactor">
    <cofactor evidence="1">
        <name>Zn(2+)</name>
        <dbReference type="ChEBI" id="CHEBI:29105"/>
    </cofactor>
    <text evidence="1">Binds 2 Zn(2+) ions per subunit.</text>
</comment>
<comment type="subunit">
    <text evidence="1">Homodimer.</text>
</comment>
<comment type="similarity">
    <text evidence="3">Belongs to the alkaline phosphatase family. PhnA subfamily.</text>
</comment>
<protein>
    <recommendedName>
        <fullName evidence="1">Phosphonoacetate hydrolase</fullName>
        <ecNumber>3.11.1.2</ecNumber>
    </recommendedName>
</protein>